<sequence length="230" mass="24517">MPEGGLIVAVDGPSGAGKSTVCRRIASMLGAKYLDTGAMYRVATLHVLRQGINPSDTTAVVQATRELPLSVNDDPASREVILDGEDVSNEIRGRLVTQNVSAVAAILEVRENLVALQRELAATAHRCVVDGRDIGSTVLVDAPVKIFLTASAEVRAQRRYDQDVAAGRLTDLATVLADVKRRDELDSNRSVSPLAPASDATVVDTSTLTLDQVVDTLMTLIEKSAERTAR</sequence>
<reference key="1">
    <citation type="journal article" date="2003" name="Nucleic Acids Res.">
        <title>The complete genome sequence and analysis of Corynebacterium diphtheriae NCTC13129.</title>
        <authorList>
            <person name="Cerdeno-Tarraga A.-M."/>
            <person name="Efstratiou A."/>
            <person name="Dover L.G."/>
            <person name="Holden M.T.G."/>
            <person name="Pallen M.J."/>
            <person name="Bentley S.D."/>
            <person name="Besra G.S."/>
            <person name="Churcher C.M."/>
            <person name="James K.D."/>
            <person name="De Zoysa A."/>
            <person name="Chillingworth T."/>
            <person name="Cronin A."/>
            <person name="Dowd L."/>
            <person name="Feltwell T."/>
            <person name="Hamlin N."/>
            <person name="Holroyd S."/>
            <person name="Jagels K."/>
            <person name="Moule S."/>
            <person name="Quail M.A."/>
            <person name="Rabbinowitsch E."/>
            <person name="Rutherford K.M."/>
            <person name="Thomson N.R."/>
            <person name="Unwin L."/>
            <person name="Whitehead S."/>
            <person name="Barrell B.G."/>
            <person name="Parkhill J."/>
        </authorList>
    </citation>
    <scope>NUCLEOTIDE SEQUENCE [LARGE SCALE GENOMIC DNA]</scope>
    <source>
        <strain>ATCC 700971 / NCTC 13129 / Biotype gravis</strain>
    </source>
</reference>
<proteinExistence type="inferred from homology"/>
<accession>Q6NHE2</accession>
<comment type="catalytic activity">
    <reaction evidence="1">
        <text>CMP + ATP = CDP + ADP</text>
        <dbReference type="Rhea" id="RHEA:11600"/>
        <dbReference type="ChEBI" id="CHEBI:30616"/>
        <dbReference type="ChEBI" id="CHEBI:58069"/>
        <dbReference type="ChEBI" id="CHEBI:60377"/>
        <dbReference type="ChEBI" id="CHEBI:456216"/>
        <dbReference type="EC" id="2.7.4.25"/>
    </reaction>
</comment>
<comment type="catalytic activity">
    <reaction evidence="1">
        <text>dCMP + ATP = dCDP + ADP</text>
        <dbReference type="Rhea" id="RHEA:25094"/>
        <dbReference type="ChEBI" id="CHEBI:30616"/>
        <dbReference type="ChEBI" id="CHEBI:57566"/>
        <dbReference type="ChEBI" id="CHEBI:58593"/>
        <dbReference type="ChEBI" id="CHEBI:456216"/>
        <dbReference type="EC" id="2.7.4.25"/>
    </reaction>
</comment>
<comment type="subcellular location">
    <subcellularLocation>
        <location evidence="1">Cytoplasm</location>
    </subcellularLocation>
</comment>
<comment type="similarity">
    <text evidence="1">Belongs to the cytidylate kinase family. Type 1 subfamily.</text>
</comment>
<comment type="sequence caution" evidence="2">
    <conflict type="erroneous initiation">
        <sequence resource="EMBL-CDS" id="CAE49723"/>
    </conflict>
</comment>
<protein>
    <recommendedName>
        <fullName evidence="1">Cytidylate kinase</fullName>
        <shortName evidence="1">CK</shortName>
        <ecNumber evidence="1">2.7.4.25</ecNumber>
    </recommendedName>
    <alternativeName>
        <fullName evidence="1">Cytidine monophosphate kinase</fullName>
        <shortName evidence="1">CMP kinase</shortName>
    </alternativeName>
</protein>
<organism>
    <name type="scientific">Corynebacterium diphtheriae (strain ATCC 700971 / NCTC 13129 / Biotype gravis)</name>
    <dbReference type="NCBI Taxonomy" id="257309"/>
    <lineage>
        <taxon>Bacteria</taxon>
        <taxon>Bacillati</taxon>
        <taxon>Actinomycetota</taxon>
        <taxon>Actinomycetes</taxon>
        <taxon>Mycobacteriales</taxon>
        <taxon>Corynebacteriaceae</taxon>
        <taxon>Corynebacterium</taxon>
    </lineage>
</organism>
<gene>
    <name evidence="1" type="primary">cmk</name>
    <name type="ordered locus">DIP1196</name>
</gene>
<keyword id="KW-0067">ATP-binding</keyword>
<keyword id="KW-0963">Cytoplasm</keyword>
<keyword id="KW-0418">Kinase</keyword>
<keyword id="KW-0547">Nucleotide-binding</keyword>
<keyword id="KW-1185">Reference proteome</keyword>
<keyword id="KW-0808">Transferase</keyword>
<name>KCY_CORDI</name>
<evidence type="ECO:0000255" key="1">
    <source>
        <dbReference type="HAMAP-Rule" id="MF_00238"/>
    </source>
</evidence>
<evidence type="ECO:0000305" key="2"/>
<feature type="chain" id="PRO_0000131907" description="Cytidylate kinase">
    <location>
        <begin position="1"/>
        <end position="230"/>
    </location>
</feature>
<feature type="binding site" evidence="1">
    <location>
        <begin position="12"/>
        <end position="20"/>
    </location>
    <ligand>
        <name>ATP</name>
        <dbReference type="ChEBI" id="CHEBI:30616"/>
    </ligand>
</feature>
<dbReference type="EC" id="2.7.4.25" evidence="1"/>
<dbReference type="EMBL" id="BX248357">
    <property type="protein sequence ID" value="CAE49723.1"/>
    <property type="status" value="ALT_INIT"/>
    <property type="molecule type" value="Genomic_DNA"/>
</dbReference>
<dbReference type="RefSeq" id="WP_010934881.1">
    <property type="nucleotide sequence ID" value="NC_002935.2"/>
</dbReference>
<dbReference type="SMR" id="Q6NHE2"/>
<dbReference type="STRING" id="257309.DIP1196"/>
<dbReference type="KEGG" id="cdi:DIP1196"/>
<dbReference type="HOGENOM" id="CLU_079959_0_0_11"/>
<dbReference type="Proteomes" id="UP000002198">
    <property type="component" value="Chromosome"/>
</dbReference>
<dbReference type="GO" id="GO:0005829">
    <property type="term" value="C:cytosol"/>
    <property type="evidence" value="ECO:0007669"/>
    <property type="project" value="TreeGrafter"/>
</dbReference>
<dbReference type="GO" id="GO:0005524">
    <property type="term" value="F:ATP binding"/>
    <property type="evidence" value="ECO:0007669"/>
    <property type="project" value="UniProtKB-UniRule"/>
</dbReference>
<dbReference type="GO" id="GO:0036430">
    <property type="term" value="F:CMP kinase activity"/>
    <property type="evidence" value="ECO:0007669"/>
    <property type="project" value="RHEA"/>
</dbReference>
<dbReference type="GO" id="GO:0036431">
    <property type="term" value="F:dCMP kinase activity"/>
    <property type="evidence" value="ECO:0007669"/>
    <property type="project" value="RHEA"/>
</dbReference>
<dbReference type="GO" id="GO:0015949">
    <property type="term" value="P:nucleobase-containing small molecule interconversion"/>
    <property type="evidence" value="ECO:0007669"/>
    <property type="project" value="TreeGrafter"/>
</dbReference>
<dbReference type="GO" id="GO:0006220">
    <property type="term" value="P:pyrimidine nucleotide metabolic process"/>
    <property type="evidence" value="ECO:0007669"/>
    <property type="project" value="UniProtKB-UniRule"/>
</dbReference>
<dbReference type="CDD" id="cd02020">
    <property type="entry name" value="CMPK"/>
    <property type="match status" value="1"/>
</dbReference>
<dbReference type="Gene3D" id="3.40.50.300">
    <property type="entry name" value="P-loop containing nucleotide triphosphate hydrolases"/>
    <property type="match status" value="1"/>
</dbReference>
<dbReference type="HAMAP" id="MF_00238">
    <property type="entry name" value="Cytidyl_kinase_type1"/>
    <property type="match status" value="1"/>
</dbReference>
<dbReference type="InterPro" id="IPR003136">
    <property type="entry name" value="Cytidylate_kin"/>
</dbReference>
<dbReference type="InterPro" id="IPR011994">
    <property type="entry name" value="Cytidylate_kinase_dom"/>
</dbReference>
<dbReference type="InterPro" id="IPR027417">
    <property type="entry name" value="P-loop_NTPase"/>
</dbReference>
<dbReference type="NCBIfam" id="TIGR00017">
    <property type="entry name" value="cmk"/>
    <property type="match status" value="1"/>
</dbReference>
<dbReference type="PANTHER" id="PTHR21299:SF2">
    <property type="entry name" value="CYTIDYLATE KINASE"/>
    <property type="match status" value="1"/>
</dbReference>
<dbReference type="PANTHER" id="PTHR21299">
    <property type="entry name" value="CYTIDYLATE KINASE/PANTOATE-BETA-ALANINE LIGASE"/>
    <property type="match status" value="1"/>
</dbReference>
<dbReference type="Pfam" id="PF02224">
    <property type="entry name" value="Cytidylate_kin"/>
    <property type="match status" value="1"/>
</dbReference>
<dbReference type="SUPFAM" id="SSF52540">
    <property type="entry name" value="P-loop containing nucleoside triphosphate hydrolases"/>
    <property type="match status" value="1"/>
</dbReference>